<organism>
    <name type="scientific">Pisum sativum</name>
    <name type="common">Garden pea</name>
    <name type="synonym">Lathyrus oleraceus</name>
    <dbReference type="NCBI Taxonomy" id="3888"/>
    <lineage>
        <taxon>Eukaryota</taxon>
        <taxon>Viridiplantae</taxon>
        <taxon>Streptophyta</taxon>
        <taxon>Embryophyta</taxon>
        <taxon>Tracheophyta</taxon>
        <taxon>Spermatophyta</taxon>
        <taxon>Magnoliopsida</taxon>
        <taxon>eudicotyledons</taxon>
        <taxon>Gunneridae</taxon>
        <taxon>Pentapetalae</taxon>
        <taxon>rosids</taxon>
        <taxon>fabids</taxon>
        <taxon>Fabales</taxon>
        <taxon>Fabaceae</taxon>
        <taxon>Papilionoideae</taxon>
        <taxon>50 kb inversion clade</taxon>
        <taxon>NPAAA clade</taxon>
        <taxon>Hologalegina</taxon>
        <taxon>IRL clade</taxon>
        <taxon>Fabeae</taxon>
        <taxon>Pisum</taxon>
    </lineage>
</organism>
<dbReference type="EC" id="4.1.1.50"/>
<dbReference type="EMBL" id="U60592">
    <property type="protein sequence ID" value="AAB03865.1"/>
    <property type="molecule type" value="mRNA"/>
</dbReference>
<dbReference type="PIR" id="T06515">
    <property type="entry name" value="T06515"/>
</dbReference>
<dbReference type="SMR" id="Q43820"/>
<dbReference type="UniPathway" id="UPA00331">
    <property type="reaction ID" value="UER00451"/>
</dbReference>
<dbReference type="GO" id="GO:0005829">
    <property type="term" value="C:cytosol"/>
    <property type="evidence" value="ECO:0007669"/>
    <property type="project" value="TreeGrafter"/>
</dbReference>
<dbReference type="GO" id="GO:0004014">
    <property type="term" value="F:adenosylmethionine decarboxylase activity"/>
    <property type="evidence" value="ECO:0007669"/>
    <property type="project" value="UniProtKB-EC"/>
</dbReference>
<dbReference type="GO" id="GO:0008295">
    <property type="term" value="P:spermidine biosynthetic process"/>
    <property type="evidence" value="ECO:0007669"/>
    <property type="project" value="UniProtKB-KW"/>
</dbReference>
<dbReference type="GO" id="GO:0006597">
    <property type="term" value="P:spermine biosynthetic process"/>
    <property type="evidence" value="ECO:0007669"/>
    <property type="project" value="InterPro"/>
</dbReference>
<dbReference type="FunFam" id="3.30.360.50:FF:000001">
    <property type="entry name" value="S-adenosylmethionine decarboxylase proenzyme"/>
    <property type="match status" value="1"/>
</dbReference>
<dbReference type="FunFam" id="3.60.90.10:FF:000002">
    <property type="entry name" value="S-adenosylmethionine decarboxylase proenzyme"/>
    <property type="match status" value="1"/>
</dbReference>
<dbReference type="Gene3D" id="3.30.360.50">
    <property type="entry name" value="S-adenosylmethionine decarboxylase"/>
    <property type="match status" value="1"/>
</dbReference>
<dbReference type="Gene3D" id="3.60.90.10">
    <property type="entry name" value="S-adenosylmethionine decarboxylase"/>
    <property type="match status" value="1"/>
</dbReference>
<dbReference type="InterPro" id="IPR048283">
    <property type="entry name" value="AdoMetDC-like"/>
</dbReference>
<dbReference type="InterPro" id="IPR001985">
    <property type="entry name" value="S-AdoMet_decarboxylase_euk"/>
</dbReference>
<dbReference type="InterPro" id="IPR016067">
    <property type="entry name" value="S-AdoMet_deCO2ase_core"/>
</dbReference>
<dbReference type="InterPro" id="IPR018166">
    <property type="entry name" value="S-AdoMet_deCO2ase_CS"/>
</dbReference>
<dbReference type="NCBIfam" id="TIGR00535">
    <property type="entry name" value="SAM_DCase"/>
    <property type="match status" value="1"/>
</dbReference>
<dbReference type="PANTHER" id="PTHR11570">
    <property type="entry name" value="S-ADENOSYLMETHIONINE DECARBOXYLASE"/>
    <property type="match status" value="1"/>
</dbReference>
<dbReference type="PANTHER" id="PTHR11570:SF15">
    <property type="entry name" value="S-ADENOSYLMETHIONINE DECARBOXYLASE PROENZYME 3"/>
    <property type="match status" value="1"/>
</dbReference>
<dbReference type="Pfam" id="PF01536">
    <property type="entry name" value="SAM_decarbox"/>
    <property type="match status" value="1"/>
</dbReference>
<dbReference type="PIRSF" id="PIRSF001355">
    <property type="entry name" value="S-AdenosylMet_decarboxylase"/>
    <property type="match status" value="1"/>
</dbReference>
<dbReference type="SUPFAM" id="SSF56276">
    <property type="entry name" value="S-adenosylmethionine decarboxylase"/>
    <property type="match status" value="1"/>
</dbReference>
<dbReference type="PROSITE" id="PS01336">
    <property type="entry name" value="ADOMETDC"/>
    <property type="match status" value="1"/>
</dbReference>
<sequence>MAVSAIGFEGFEKRLEISFSDPGLFSDPQGRGLRSLTKSQLDEILAPAECTIVSSLANEDVDSYVLSESSLFVYAYKLIIKTCGTTKLLLSIPPILKLADSISLNVRSVRYTRGSFIFPGAQSFPHRHFSEEVAVLDGFFGKLGSGSMAYILGGSDEAQNWHIYCASSDSVSPEGSVYTLEMCMTGLDREKASVFFKEQTGSAAEMTVNSGIRKILRNSEICDFDFEPCGYSMNSVEGSAVSTIHITPEDGFSYASFETAGYDLKAINLNEMVMRVLACFQPTEFSVAVHVDNASKSFEQGCLLDVKGYCCEEKSHQGLGMSGSVVYQKFLKTSYCGSPRSTLKCWKDEDEEE</sequence>
<gene>
    <name type="primary">SAMDC</name>
</gene>
<proteinExistence type="evidence at transcript level"/>
<name>DCAM_PEA</name>
<protein>
    <recommendedName>
        <fullName>S-adenosylmethionine decarboxylase proenzyme</fullName>
        <shortName>AdoMetDC</shortName>
        <shortName>SAMDC</shortName>
        <ecNumber>4.1.1.50</ecNumber>
    </recommendedName>
    <component>
        <recommendedName>
            <fullName>S-adenosylmethionine decarboxylase alpha chain</fullName>
        </recommendedName>
    </component>
    <component>
        <recommendedName>
            <fullName>S-adenosylmethionine decarboxylase beta chain</fullName>
        </recommendedName>
    </component>
</protein>
<evidence type="ECO:0000250" key="1"/>
<evidence type="ECO:0000305" key="2"/>
<feature type="chain" id="PRO_0000030019" description="S-adenosylmethionine decarboxylase beta chain" evidence="1">
    <location>
        <begin position="1"/>
        <end position="68"/>
    </location>
</feature>
<feature type="chain" id="PRO_0000030020" description="S-adenosylmethionine decarboxylase alpha chain" evidence="1">
    <location>
        <begin position="69"/>
        <end position="353"/>
    </location>
</feature>
<feature type="active site" evidence="1">
    <location>
        <position position="9"/>
    </location>
</feature>
<feature type="active site" evidence="1">
    <location>
        <position position="12"/>
    </location>
</feature>
<feature type="active site" description="Schiff-base intermediate with substrate; via pyruvic acid" evidence="1">
    <location>
        <position position="69"/>
    </location>
</feature>
<feature type="active site" description="Proton donor; for catalytic activity" evidence="1">
    <location>
        <position position="83"/>
    </location>
</feature>
<feature type="active site" description="Proton acceptor; for processing activity" evidence="1">
    <location>
        <position position="232"/>
    </location>
</feature>
<feature type="active site" description="Proton acceptor; for processing activity" evidence="1">
    <location>
        <position position="245"/>
    </location>
</feature>
<feature type="site" description="Cleavage (non-hydrolytic); by autolysis" evidence="1">
    <location>
        <begin position="68"/>
        <end position="69"/>
    </location>
</feature>
<feature type="modified residue" description="Pyruvic acid (Ser); by autocatalysis" evidence="1">
    <location>
        <position position="69"/>
    </location>
</feature>
<keyword id="KW-0068">Autocatalytic cleavage</keyword>
<keyword id="KW-0210">Decarboxylase</keyword>
<keyword id="KW-0456">Lyase</keyword>
<keyword id="KW-0620">Polyamine biosynthesis</keyword>
<keyword id="KW-0670">Pyruvate</keyword>
<keyword id="KW-0949">S-adenosyl-L-methionine</keyword>
<keyword id="KW-0704">Schiff base</keyword>
<keyword id="KW-0745">Spermidine biosynthesis</keyword>
<keyword id="KW-0865">Zymogen</keyword>
<reference key="1">
    <citation type="journal article" date="2002" name="Planta">
        <title>Expression of the pea S-adenosylmethionine decarboxylase gene is involved in developmental and environmental responses.</title>
        <authorList>
            <person name="Marco F."/>
            <person name="Carrasco P."/>
        </authorList>
    </citation>
    <scope>NUCLEOTIDE SEQUENCE [MRNA]</scope>
    <source>
        <strain>cv. Alaska</strain>
    </source>
</reference>
<comment type="catalytic activity">
    <reaction>
        <text>S-adenosyl-L-methionine + H(+) = S-adenosyl 3-(methylsulfanyl)propylamine + CO2</text>
        <dbReference type="Rhea" id="RHEA:15981"/>
        <dbReference type="ChEBI" id="CHEBI:15378"/>
        <dbReference type="ChEBI" id="CHEBI:16526"/>
        <dbReference type="ChEBI" id="CHEBI:57443"/>
        <dbReference type="ChEBI" id="CHEBI:59789"/>
        <dbReference type="EC" id="4.1.1.50"/>
    </reaction>
</comment>
<comment type="cofactor">
    <cofactor evidence="1">
        <name>pyruvate</name>
        <dbReference type="ChEBI" id="CHEBI:15361"/>
    </cofactor>
    <text evidence="1">Binds 1 pyruvoyl group covalently per subunit.</text>
</comment>
<comment type="pathway">
    <text>Amine and polyamine biosynthesis; S-adenosylmethioninamine biosynthesis; S-adenosylmethioninamine from S-adenosyl-L-methionine: step 1/1.</text>
</comment>
<comment type="PTM">
    <text evidence="1">Is synthesized initially as an inactive proenzyme. Formation of the active enzyme involves a self-maturation process in which the active site pyruvoyl group is generated from an internal serine residue via an autocatalytic post-translational modification. Two non-identical subunits are generated from the proenzyme in this reaction, and the pyruvate is formed at the N-terminus of the alpha chain, which is derived from the carboxyl end of the proenzyme. The post-translation cleavage follows an unusual pathway, termed non-hydrolytic serinolysis, in which the side chain hydroxyl group of the serine supplies its oxygen atom to form the C-terminus of the beta chain, while the remainder of the serine residue undergoes an oxidative deamination to produce ammonia and the pyruvoyl group blocking the N-terminus of the alpha chain (By similarity).</text>
</comment>
<comment type="similarity">
    <text evidence="2">Belongs to the eukaryotic AdoMetDC family.</text>
</comment>
<accession>Q43820</accession>